<feature type="chain" id="PRO_0000087757" description="Probable DNA-directed RNA polymerase">
    <location>
        <begin position="1"/>
        <end position="896"/>
    </location>
</feature>
<feature type="active site" evidence="1">
    <location>
        <position position="546"/>
    </location>
</feature>
<feature type="active site" evidence="1">
    <location>
        <position position="617"/>
    </location>
</feature>
<feature type="active site" evidence="1">
    <location>
        <position position="798"/>
    </location>
</feature>
<geneLocation type="mitochondrion"/>
<geneLocation type="plasmid">
    <name>maranhar</name>
</geneLocation>
<comment type="function">
    <text>DNA-dependent RNA polymerase catalyzes the transcription of DNA into RNA using the four ribonucleoside triphosphates as substrates.</text>
</comment>
<comment type="catalytic activity">
    <reaction evidence="2 3">
        <text>RNA(n) + a ribonucleoside 5'-triphosphate = RNA(n+1) + diphosphate</text>
        <dbReference type="Rhea" id="RHEA:21248"/>
        <dbReference type="Rhea" id="RHEA-COMP:14527"/>
        <dbReference type="Rhea" id="RHEA-COMP:17342"/>
        <dbReference type="ChEBI" id="CHEBI:33019"/>
        <dbReference type="ChEBI" id="CHEBI:61557"/>
        <dbReference type="ChEBI" id="CHEBI:140395"/>
        <dbReference type="EC" id="2.7.7.6"/>
    </reaction>
</comment>
<comment type="subcellular location">
    <subcellularLocation>
        <location evidence="4">Mitochondrion</location>
    </subcellularLocation>
</comment>
<comment type="similarity">
    <text evidence="4">Belongs to the phage and mitochondrial RNA polymerase family.</text>
</comment>
<keyword id="KW-0240">DNA-directed RNA polymerase</keyword>
<keyword id="KW-0496">Mitochondrion</keyword>
<keyword id="KW-0548">Nucleotidyltransferase</keyword>
<keyword id="KW-0614">Plasmid</keyword>
<keyword id="KW-0804">Transcription</keyword>
<keyword id="KW-0808">Transferase</keyword>
<evidence type="ECO:0000250" key="1"/>
<evidence type="ECO:0000255" key="2">
    <source>
        <dbReference type="PROSITE-ProRule" id="PRU10031"/>
    </source>
</evidence>
<evidence type="ECO:0000255" key="3">
    <source>
        <dbReference type="PROSITE-ProRule" id="PRU10032"/>
    </source>
</evidence>
<evidence type="ECO:0000305" key="4"/>
<proteinExistence type="inferred from homology"/>
<protein>
    <recommendedName>
        <fullName>Probable DNA-directed RNA polymerase</fullName>
        <ecNumber>2.7.7.6</ecNumber>
    </recommendedName>
</protein>
<dbReference type="EC" id="2.7.7.6"/>
<dbReference type="EMBL" id="X55361">
    <property type="protein sequence ID" value="CAA39045.1"/>
    <property type="status" value="ALT_SEQ"/>
    <property type="molecule type" value="Genomic_DNA"/>
</dbReference>
<dbReference type="PIR" id="S26984">
    <property type="entry name" value="S26984"/>
</dbReference>
<dbReference type="SMR" id="P33540"/>
<dbReference type="VEuPathDB" id="FungiDB:NCU06308"/>
<dbReference type="GO" id="GO:0034245">
    <property type="term" value="C:mitochondrial DNA-directed RNA polymerase complex"/>
    <property type="evidence" value="ECO:0007669"/>
    <property type="project" value="TreeGrafter"/>
</dbReference>
<dbReference type="GO" id="GO:0003899">
    <property type="term" value="F:DNA-directed RNA polymerase activity"/>
    <property type="evidence" value="ECO:0007669"/>
    <property type="project" value="UniProtKB-EC"/>
</dbReference>
<dbReference type="GO" id="GO:0001018">
    <property type="term" value="F:mitochondrial promoter sequence-specific DNA binding"/>
    <property type="evidence" value="ECO:0007669"/>
    <property type="project" value="TreeGrafter"/>
</dbReference>
<dbReference type="GO" id="GO:0006390">
    <property type="term" value="P:mitochondrial transcription"/>
    <property type="evidence" value="ECO:0007669"/>
    <property type="project" value="TreeGrafter"/>
</dbReference>
<dbReference type="Gene3D" id="1.10.287.280">
    <property type="match status" value="1"/>
</dbReference>
<dbReference type="Gene3D" id="1.10.150.20">
    <property type="entry name" value="5' to 3' exonuclease, C-terminal subdomain"/>
    <property type="match status" value="1"/>
</dbReference>
<dbReference type="Gene3D" id="1.10.1320.10">
    <property type="entry name" value="DNA-directed RNA polymerase, N-terminal domain"/>
    <property type="match status" value="1"/>
</dbReference>
<dbReference type="InterPro" id="IPR046950">
    <property type="entry name" value="DNA-dir_Rpol_C_phage-type"/>
</dbReference>
<dbReference type="InterPro" id="IPR002092">
    <property type="entry name" value="DNA-dir_Rpol_phage-type"/>
</dbReference>
<dbReference type="InterPro" id="IPR043502">
    <property type="entry name" value="DNA/RNA_pol_sf"/>
</dbReference>
<dbReference type="InterPro" id="IPR037159">
    <property type="entry name" value="RNA_POL_N_sf"/>
</dbReference>
<dbReference type="PANTHER" id="PTHR10102">
    <property type="entry name" value="DNA-DIRECTED RNA POLYMERASE, MITOCHONDRIAL"/>
    <property type="match status" value="1"/>
</dbReference>
<dbReference type="PANTHER" id="PTHR10102:SF0">
    <property type="entry name" value="DNA-DIRECTED RNA POLYMERASE, MITOCHONDRIAL"/>
    <property type="match status" value="1"/>
</dbReference>
<dbReference type="Pfam" id="PF00940">
    <property type="entry name" value="RNA_pol"/>
    <property type="match status" value="1"/>
</dbReference>
<dbReference type="SUPFAM" id="SSF56672">
    <property type="entry name" value="DNA/RNA polymerases"/>
    <property type="match status" value="1"/>
</dbReference>
<dbReference type="PROSITE" id="PS00900">
    <property type="entry name" value="RNA_POL_PHAGE_1"/>
    <property type="match status" value="1"/>
</dbReference>
<dbReference type="PROSITE" id="PS00489">
    <property type="entry name" value="RNA_POL_PHAGE_2"/>
    <property type="match status" value="1"/>
</dbReference>
<sequence length="896" mass="103973">MIKFYFTTFHMKFPARLFSTSFTLNNTNIINEKDVKYITKNFLLENSNGFNLIKNIINSDETSEVKQNKIEVELNNIWHTEITDILQKKRSLGLDAIGSSILAKDFHNLIGDIENFINKGRTNKLPGVEYLKPSLIISIVLGKVIPFSLRHSDIFNQPTHSLFAEIGKILKYQSIFELHHRIGLIQNRVEEIKNYTEKKLVSEFNKLTKVLDEYKNTLKNLEELSGESIIKVGLGFTALLSETSEFYSLEEQIIAKNKSIRYIIPKNKLKTLINNITLMDTIELPMIIPPLEWKIDDNEKIIEYGGTILNNKHRIRPLRTKSVENSDANDMTYNKELVDAVNFKSKIPYTINLKILDFITRDEFINRDKKDNVIIYKHIHPDSALLGEYMKDRKNPKISEITTHNSKFLYHSSIISIAKLMKDVKEFYMTVFIDWRGRFYTSSCALNIQGGELARSLLLFKEGQKLNDIGLKALKIYTANAFGLDKRSKEERLDWVEQNLHKIIDIDNYEIWREADEPLLFLACALELKGYNEDPNFISHLPILMDATCNGLQHLSAMVNDFVLAEKVNLLKSTENDNPRDLYSEVIPHIKQEILEASKSYEHTNLERINVERCLVKRGLMTITYGATERGIYDQIVSKFFQKDEWNKTVGLHFVCIDSDIAPKDVVFTQKNILLLSKIIYNSLFKIHPNLNTLMVYFNSIVKVLCELDLPVNWVTPYGLVIQQKYNKFTKYNETTYVASKRYKLVLRKADTTSISKQKQIQAFIPNFVHSMDGSNIVLLINTIRDEGRKINFASIHDCFATHANDTAWLSWYVKQSFIRIYSDSSFLRRFHNYIQLRIQAKYGEDAHFDKDGVLTHVTIDNGTDIPDRIDIPKPLVVNKDNKIYKEILHSEYFIN</sequence>
<accession>P33540</accession>
<organism>
    <name type="scientific">Neurospora crassa</name>
    <dbReference type="NCBI Taxonomy" id="5141"/>
    <lineage>
        <taxon>Eukaryota</taxon>
        <taxon>Fungi</taxon>
        <taxon>Dikarya</taxon>
        <taxon>Ascomycota</taxon>
        <taxon>Pezizomycotina</taxon>
        <taxon>Sordariomycetes</taxon>
        <taxon>Sordariomycetidae</taxon>
        <taxon>Sordariales</taxon>
        <taxon>Sordariaceae</taxon>
        <taxon>Neurospora</taxon>
    </lineage>
</organism>
<name>RPOP_NEUCS</name>
<reference key="1">
    <citation type="journal article" date="1992" name="Curr. Genet.">
        <title>Genetic organization and structural features of maranhar, a senescence-inducing linear mitochondrial plasmid of Neurospora crassa.</title>
        <authorList>
            <person name="Court D.A."/>
            <person name="Bertrand H."/>
        </authorList>
    </citation>
    <scope>NUCLEOTIDE SEQUENCE [GENOMIC DNA]</scope>
    <source>
        <strain>AAREY-1E</strain>
    </source>
</reference>